<reference key="1">
    <citation type="journal article" date="2008" name="Genome Biol.">
        <title>The complete genome, comparative and functional analysis of Stenotrophomonas maltophilia reveals an organism heavily shielded by drug resistance determinants.</title>
        <authorList>
            <person name="Crossman L.C."/>
            <person name="Gould V.C."/>
            <person name="Dow J.M."/>
            <person name="Vernikos G.S."/>
            <person name="Okazaki A."/>
            <person name="Sebaihia M."/>
            <person name="Saunders D."/>
            <person name="Arrowsmith C."/>
            <person name="Carver T."/>
            <person name="Peters N."/>
            <person name="Adlem E."/>
            <person name="Kerhornou A."/>
            <person name="Lord A."/>
            <person name="Murphy L."/>
            <person name="Seeger K."/>
            <person name="Squares R."/>
            <person name="Rutter S."/>
            <person name="Quail M.A."/>
            <person name="Rajandream M.A."/>
            <person name="Harris D."/>
            <person name="Churcher C."/>
            <person name="Bentley S.D."/>
            <person name="Parkhill J."/>
            <person name="Thomson N.R."/>
            <person name="Avison M.B."/>
        </authorList>
    </citation>
    <scope>NUCLEOTIDE SEQUENCE [LARGE SCALE GENOMIC DNA]</scope>
    <source>
        <strain>K279a</strain>
    </source>
</reference>
<name>NFUA_STRMK</name>
<protein>
    <recommendedName>
        <fullName evidence="1">Fe/S biogenesis protein NfuA</fullName>
    </recommendedName>
</protein>
<feature type="chain" id="PRO_1000186784" description="Fe/S biogenesis protein NfuA">
    <location>
        <begin position="1"/>
        <end position="199"/>
    </location>
</feature>
<feature type="binding site" evidence="1">
    <location>
        <position position="151"/>
    </location>
    <ligand>
        <name>[4Fe-4S] cluster</name>
        <dbReference type="ChEBI" id="CHEBI:49883"/>
    </ligand>
</feature>
<feature type="binding site" evidence="1">
    <location>
        <position position="154"/>
    </location>
    <ligand>
        <name>[4Fe-4S] cluster</name>
        <dbReference type="ChEBI" id="CHEBI:49883"/>
    </ligand>
</feature>
<proteinExistence type="inferred from homology"/>
<evidence type="ECO:0000255" key="1">
    <source>
        <dbReference type="HAMAP-Rule" id="MF_01637"/>
    </source>
</evidence>
<gene>
    <name evidence="1" type="primary">nfuA</name>
    <name type="ordered locus">Smlt3242</name>
</gene>
<accession>B2FM87</accession>
<keyword id="KW-0004">4Fe-4S</keyword>
<keyword id="KW-0408">Iron</keyword>
<keyword id="KW-0411">Iron-sulfur</keyword>
<keyword id="KW-0479">Metal-binding</keyword>
<keyword id="KW-1185">Reference proteome</keyword>
<organism>
    <name type="scientific">Stenotrophomonas maltophilia (strain K279a)</name>
    <dbReference type="NCBI Taxonomy" id="522373"/>
    <lineage>
        <taxon>Bacteria</taxon>
        <taxon>Pseudomonadati</taxon>
        <taxon>Pseudomonadota</taxon>
        <taxon>Gammaproteobacteria</taxon>
        <taxon>Lysobacterales</taxon>
        <taxon>Lysobacteraceae</taxon>
        <taxon>Stenotrophomonas</taxon>
        <taxon>Stenotrophomonas maltophilia group</taxon>
    </lineage>
</organism>
<comment type="function">
    <text evidence="1">Involved in iron-sulfur cluster biogenesis. Binds a 4Fe-4S cluster, can transfer this cluster to apoproteins, and thereby intervenes in the maturation of Fe/S proteins. Could also act as a scaffold/chaperone for damaged Fe/S proteins.</text>
</comment>
<comment type="cofactor">
    <cofactor evidence="1">
        <name>[4Fe-4S] cluster</name>
        <dbReference type="ChEBI" id="CHEBI:49883"/>
    </cofactor>
    <text evidence="1">Binds 1 [4Fe-4S] cluster per subunit. The cluster is presumably bound at the interface of two monomers.</text>
</comment>
<comment type="subunit">
    <text evidence="1">Homodimer.</text>
</comment>
<comment type="similarity">
    <text evidence="1">Belongs to the NfuA family.</text>
</comment>
<dbReference type="EMBL" id="AM743169">
    <property type="protein sequence ID" value="CAQ46682.1"/>
    <property type="molecule type" value="Genomic_DNA"/>
</dbReference>
<dbReference type="RefSeq" id="WP_005410314.1">
    <property type="nucleotide sequence ID" value="NC_010943.1"/>
</dbReference>
<dbReference type="SMR" id="B2FM87"/>
<dbReference type="EnsemblBacteria" id="CAQ46682">
    <property type="protein sequence ID" value="CAQ46682"/>
    <property type="gene ID" value="Smlt3242"/>
</dbReference>
<dbReference type="KEGG" id="sml:Smlt3242"/>
<dbReference type="eggNOG" id="COG0316">
    <property type="taxonomic scope" value="Bacteria"/>
</dbReference>
<dbReference type="eggNOG" id="COG0694">
    <property type="taxonomic scope" value="Bacteria"/>
</dbReference>
<dbReference type="HOGENOM" id="CLU_094569_0_0_6"/>
<dbReference type="Proteomes" id="UP000008840">
    <property type="component" value="Chromosome"/>
</dbReference>
<dbReference type="GO" id="GO:0051539">
    <property type="term" value="F:4 iron, 4 sulfur cluster binding"/>
    <property type="evidence" value="ECO:0007669"/>
    <property type="project" value="UniProtKB-UniRule"/>
</dbReference>
<dbReference type="GO" id="GO:0005506">
    <property type="term" value="F:iron ion binding"/>
    <property type="evidence" value="ECO:0007669"/>
    <property type="project" value="InterPro"/>
</dbReference>
<dbReference type="GO" id="GO:0016226">
    <property type="term" value="P:iron-sulfur cluster assembly"/>
    <property type="evidence" value="ECO:0007669"/>
    <property type="project" value="UniProtKB-UniRule"/>
</dbReference>
<dbReference type="GO" id="GO:0051604">
    <property type="term" value="P:protein maturation"/>
    <property type="evidence" value="ECO:0007669"/>
    <property type="project" value="UniProtKB-UniRule"/>
</dbReference>
<dbReference type="Gene3D" id="3.30.300.130">
    <property type="entry name" value="Fe-S cluster assembly (FSCA)"/>
    <property type="match status" value="1"/>
</dbReference>
<dbReference type="Gene3D" id="2.60.300.12">
    <property type="entry name" value="HesB-like domain"/>
    <property type="match status" value="1"/>
</dbReference>
<dbReference type="HAMAP" id="MF_01637">
    <property type="entry name" value="Fe_S_biogen_NfuA"/>
    <property type="match status" value="1"/>
</dbReference>
<dbReference type="InterPro" id="IPR017726">
    <property type="entry name" value="Fe/S_biogenesis_protein_NfuA"/>
</dbReference>
<dbReference type="InterPro" id="IPR034904">
    <property type="entry name" value="FSCA_dom_sf"/>
</dbReference>
<dbReference type="InterPro" id="IPR035903">
    <property type="entry name" value="HesB-like_dom_sf"/>
</dbReference>
<dbReference type="InterPro" id="IPR001075">
    <property type="entry name" value="NIF_FeS_clus_asmbl_NifU_C"/>
</dbReference>
<dbReference type="PANTHER" id="PTHR11178:SF51">
    <property type="entry name" value="FE_S BIOGENESIS PROTEIN NFUA"/>
    <property type="match status" value="1"/>
</dbReference>
<dbReference type="PANTHER" id="PTHR11178">
    <property type="entry name" value="IRON-SULFUR CLUSTER SCAFFOLD PROTEIN NFU-RELATED"/>
    <property type="match status" value="1"/>
</dbReference>
<dbReference type="Pfam" id="PF01106">
    <property type="entry name" value="NifU"/>
    <property type="match status" value="1"/>
</dbReference>
<dbReference type="SUPFAM" id="SSF117916">
    <property type="entry name" value="Fe-S cluster assembly (FSCA) domain-like"/>
    <property type="match status" value="1"/>
</dbReference>
<dbReference type="SUPFAM" id="SSF89360">
    <property type="entry name" value="HesB-like domain"/>
    <property type="match status" value="1"/>
</dbReference>
<sequence length="199" mass="20867">MIQISDTAQTHFRKLIEREGVPGMGVRLSAVDPGTPRADARLEFAEPTDLLGDEWAVDCDGFTLYVDAGSVGWLDGAEIDIVAGSAGTQQLTIKAPRIKGEAPGDAASLVERVHWVVENEINPQLASHGGKVAVQEVSAEGVVLLRFGGGCQGCGMADVTLKQGIEKTLMGRVPGVTAVRDATDHDSGHAPYIPRGNAA</sequence>